<evidence type="ECO:0000255" key="1">
    <source>
        <dbReference type="HAMAP-Rule" id="MF_01325"/>
    </source>
</evidence>
<evidence type="ECO:0000256" key="2">
    <source>
        <dbReference type="SAM" id="MobiDB-lite"/>
    </source>
</evidence>
<evidence type="ECO:0000305" key="3"/>
<feature type="chain" id="PRO_1000052141" description="Large ribosomal subunit protein uL3">
    <location>
        <begin position="1"/>
        <end position="212"/>
    </location>
</feature>
<feature type="region of interest" description="Disordered" evidence="2">
    <location>
        <begin position="136"/>
        <end position="155"/>
    </location>
</feature>
<feature type="modified residue" description="N5-methylglutamine" evidence="1">
    <location>
        <position position="153"/>
    </location>
</feature>
<reference key="1">
    <citation type="submission" date="2006-08" db="EMBL/GenBank/DDBJ databases">
        <title>Complete sequence of chromosome 1 of Shewanella sp. MR-7.</title>
        <authorList>
            <person name="Copeland A."/>
            <person name="Lucas S."/>
            <person name="Lapidus A."/>
            <person name="Barry K."/>
            <person name="Detter J.C."/>
            <person name="Glavina del Rio T."/>
            <person name="Hammon N."/>
            <person name="Israni S."/>
            <person name="Dalin E."/>
            <person name="Tice H."/>
            <person name="Pitluck S."/>
            <person name="Kiss H."/>
            <person name="Brettin T."/>
            <person name="Bruce D."/>
            <person name="Han C."/>
            <person name="Tapia R."/>
            <person name="Gilna P."/>
            <person name="Schmutz J."/>
            <person name="Larimer F."/>
            <person name="Land M."/>
            <person name="Hauser L."/>
            <person name="Kyrpides N."/>
            <person name="Mikhailova N."/>
            <person name="Nealson K."/>
            <person name="Konstantinidis K."/>
            <person name="Klappenbach J."/>
            <person name="Tiedje J."/>
            <person name="Richardson P."/>
        </authorList>
    </citation>
    <scope>NUCLEOTIDE SEQUENCE [LARGE SCALE GENOMIC DNA]</scope>
    <source>
        <strain>MR-7</strain>
    </source>
</reference>
<protein>
    <recommendedName>
        <fullName evidence="1">Large ribosomal subunit protein uL3</fullName>
    </recommendedName>
    <alternativeName>
        <fullName evidence="3">50S ribosomal protein L3</fullName>
    </alternativeName>
</protein>
<accession>Q0I0A5</accession>
<gene>
    <name evidence="1" type="primary">rplC</name>
    <name type="ordered locus">Shewmr7_0194</name>
</gene>
<comment type="function">
    <text evidence="1">One of the primary rRNA binding proteins, it binds directly near the 3'-end of the 23S rRNA, where it nucleates assembly of the 50S subunit.</text>
</comment>
<comment type="subunit">
    <text evidence="1">Part of the 50S ribosomal subunit. Forms a cluster with proteins L14 and L19.</text>
</comment>
<comment type="PTM">
    <text evidence="1">Methylated by PrmB.</text>
</comment>
<comment type="similarity">
    <text evidence="1">Belongs to the universal ribosomal protein uL3 family.</text>
</comment>
<dbReference type="EMBL" id="CP000444">
    <property type="protein sequence ID" value="ABI41200.1"/>
    <property type="molecule type" value="Genomic_DNA"/>
</dbReference>
<dbReference type="SMR" id="Q0I0A5"/>
<dbReference type="KEGG" id="shm:Shewmr7_0194"/>
<dbReference type="HOGENOM" id="CLU_044142_4_1_6"/>
<dbReference type="GO" id="GO:0022625">
    <property type="term" value="C:cytosolic large ribosomal subunit"/>
    <property type="evidence" value="ECO:0007669"/>
    <property type="project" value="TreeGrafter"/>
</dbReference>
<dbReference type="GO" id="GO:0019843">
    <property type="term" value="F:rRNA binding"/>
    <property type="evidence" value="ECO:0007669"/>
    <property type="project" value="UniProtKB-UniRule"/>
</dbReference>
<dbReference type="GO" id="GO:0003735">
    <property type="term" value="F:structural constituent of ribosome"/>
    <property type="evidence" value="ECO:0007669"/>
    <property type="project" value="InterPro"/>
</dbReference>
<dbReference type="GO" id="GO:0006412">
    <property type="term" value="P:translation"/>
    <property type="evidence" value="ECO:0007669"/>
    <property type="project" value="UniProtKB-UniRule"/>
</dbReference>
<dbReference type="FunFam" id="2.40.30.10:FF:000004">
    <property type="entry name" value="50S ribosomal protein L3"/>
    <property type="match status" value="1"/>
</dbReference>
<dbReference type="FunFam" id="3.30.160.810:FF:000001">
    <property type="entry name" value="50S ribosomal protein L3"/>
    <property type="match status" value="1"/>
</dbReference>
<dbReference type="Gene3D" id="3.30.160.810">
    <property type="match status" value="1"/>
</dbReference>
<dbReference type="Gene3D" id="2.40.30.10">
    <property type="entry name" value="Translation factors"/>
    <property type="match status" value="1"/>
</dbReference>
<dbReference type="HAMAP" id="MF_01325_B">
    <property type="entry name" value="Ribosomal_uL3_B"/>
    <property type="match status" value="1"/>
</dbReference>
<dbReference type="InterPro" id="IPR000597">
    <property type="entry name" value="Ribosomal_uL3"/>
</dbReference>
<dbReference type="InterPro" id="IPR019927">
    <property type="entry name" value="Ribosomal_uL3_bac/org-type"/>
</dbReference>
<dbReference type="InterPro" id="IPR019926">
    <property type="entry name" value="Ribosomal_uL3_CS"/>
</dbReference>
<dbReference type="InterPro" id="IPR009000">
    <property type="entry name" value="Transl_B-barrel_sf"/>
</dbReference>
<dbReference type="NCBIfam" id="TIGR03625">
    <property type="entry name" value="L3_bact"/>
    <property type="match status" value="1"/>
</dbReference>
<dbReference type="PANTHER" id="PTHR11229">
    <property type="entry name" value="50S RIBOSOMAL PROTEIN L3"/>
    <property type="match status" value="1"/>
</dbReference>
<dbReference type="PANTHER" id="PTHR11229:SF16">
    <property type="entry name" value="LARGE RIBOSOMAL SUBUNIT PROTEIN UL3C"/>
    <property type="match status" value="1"/>
</dbReference>
<dbReference type="Pfam" id="PF00297">
    <property type="entry name" value="Ribosomal_L3"/>
    <property type="match status" value="1"/>
</dbReference>
<dbReference type="SUPFAM" id="SSF50447">
    <property type="entry name" value="Translation proteins"/>
    <property type="match status" value="1"/>
</dbReference>
<dbReference type="PROSITE" id="PS00474">
    <property type="entry name" value="RIBOSOMAL_L3"/>
    <property type="match status" value="1"/>
</dbReference>
<sequence length="212" mass="22532">MAIGLIGRKVGMTRIFTEDGVSIPVTVIEVAGNRVTQVKTLETDGYRALQVTTGTKKANRITKPEAGHFAKSGVEAGRGLWELRLADGEGEGIEVGAELNVGIFADVAKVDVTGQSKGKGFQGGVKRWNFRTQDMTHGNSLSHRSNGSIGQNQTPGRVFKGKKMSGHMGAERVTTQNLDVVRVDVERNLLLVKGAVPGATNGDLIIKPAVKA</sequence>
<keyword id="KW-0488">Methylation</keyword>
<keyword id="KW-0687">Ribonucleoprotein</keyword>
<keyword id="KW-0689">Ribosomal protein</keyword>
<keyword id="KW-0694">RNA-binding</keyword>
<keyword id="KW-0699">rRNA-binding</keyword>
<proteinExistence type="inferred from homology"/>
<organism>
    <name type="scientific">Shewanella sp. (strain MR-7)</name>
    <dbReference type="NCBI Taxonomy" id="60481"/>
    <lineage>
        <taxon>Bacteria</taxon>
        <taxon>Pseudomonadati</taxon>
        <taxon>Pseudomonadota</taxon>
        <taxon>Gammaproteobacteria</taxon>
        <taxon>Alteromonadales</taxon>
        <taxon>Shewanellaceae</taxon>
        <taxon>Shewanella</taxon>
    </lineage>
</organism>
<name>RL3_SHESR</name>